<dbReference type="EMBL" id="BX571857">
    <property type="protein sequence ID" value="CAG43510.1"/>
    <property type="molecule type" value="Genomic_DNA"/>
</dbReference>
<dbReference type="RefSeq" id="WP_000623476.1">
    <property type="nucleotide sequence ID" value="NC_002953.3"/>
</dbReference>
<dbReference type="SMR" id="Q6G8E7"/>
<dbReference type="KEGG" id="sas:SAS1707"/>
<dbReference type="HOGENOM" id="CLU_114342_2_3_9"/>
<dbReference type="GO" id="GO:0005886">
    <property type="term" value="C:plasma membrane"/>
    <property type="evidence" value="ECO:0007669"/>
    <property type="project" value="UniProtKB-SubCell"/>
</dbReference>
<dbReference type="GO" id="GO:0062054">
    <property type="term" value="F:fluoride channel activity"/>
    <property type="evidence" value="ECO:0007669"/>
    <property type="project" value="UniProtKB-UniRule"/>
</dbReference>
<dbReference type="GO" id="GO:0046872">
    <property type="term" value="F:metal ion binding"/>
    <property type="evidence" value="ECO:0007669"/>
    <property type="project" value="UniProtKB-KW"/>
</dbReference>
<dbReference type="GO" id="GO:0140114">
    <property type="term" value="P:cellular detoxification of fluoride"/>
    <property type="evidence" value="ECO:0007669"/>
    <property type="project" value="UniProtKB-UniRule"/>
</dbReference>
<dbReference type="HAMAP" id="MF_00454">
    <property type="entry name" value="FluC"/>
    <property type="match status" value="1"/>
</dbReference>
<dbReference type="InterPro" id="IPR003691">
    <property type="entry name" value="FluC"/>
</dbReference>
<dbReference type="PANTHER" id="PTHR28259">
    <property type="entry name" value="FLUORIDE EXPORT PROTEIN 1-RELATED"/>
    <property type="match status" value="1"/>
</dbReference>
<dbReference type="PANTHER" id="PTHR28259:SF16">
    <property type="entry name" value="FLUORIDE-SPECIFIC ION CHANNEL FLUC 2"/>
    <property type="match status" value="1"/>
</dbReference>
<dbReference type="Pfam" id="PF02537">
    <property type="entry name" value="CRCB"/>
    <property type="match status" value="1"/>
</dbReference>
<evidence type="ECO:0000255" key="1">
    <source>
        <dbReference type="HAMAP-Rule" id="MF_00454"/>
    </source>
</evidence>
<sequence length="117" mass="12839">MISIILVMIGGGFGAITRSAITDYFNHKFTSKLPIATLIVNLVGSFLIGLNIGLSISISWFPAFFVTGFLGGLTTFSTLAKELTLMMTPKFNINLFLNYSLLQFIIGFIACYIGYHI</sequence>
<proteinExistence type="inferred from homology"/>
<accession>Q6G8E7</accession>
<reference key="1">
    <citation type="journal article" date="2004" name="Proc. Natl. Acad. Sci. U.S.A.">
        <title>Complete genomes of two clinical Staphylococcus aureus strains: evidence for the rapid evolution of virulence and drug resistance.</title>
        <authorList>
            <person name="Holden M.T.G."/>
            <person name="Feil E.J."/>
            <person name="Lindsay J.A."/>
            <person name="Peacock S.J."/>
            <person name="Day N.P.J."/>
            <person name="Enright M.C."/>
            <person name="Foster T.J."/>
            <person name="Moore C.E."/>
            <person name="Hurst L."/>
            <person name="Atkin R."/>
            <person name="Barron A."/>
            <person name="Bason N."/>
            <person name="Bentley S.D."/>
            <person name="Chillingworth C."/>
            <person name="Chillingworth T."/>
            <person name="Churcher C."/>
            <person name="Clark L."/>
            <person name="Corton C."/>
            <person name="Cronin A."/>
            <person name="Doggett J."/>
            <person name="Dowd L."/>
            <person name="Feltwell T."/>
            <person name="Hance Z."/>
            <person name="Harris B."/>
            <person name="Hauser H."/>
            <person name="Holroyd S."/>
            <person name="Jagels K."/>
            <person name="James K.D."/>
            <person name="Lennard N."/>
            <person name="Line A."/>
            <person name="Mayes R."/>
            <person name="Moule S."/>
            <person name="Mungall K."/>
            <person name="Ormond D."/>
            <person name="Quail M.A."/>
            <person name="Rabbinowitsch E."/>
            <person name="Rutherford K.M."/>
            <person name="Sanders M."/>
            <person name="Sharp S."/>
            <person name="Simmonds M."/>
            <person name="Stevens K."/>
            <person name="Whitehead S."/>
            <person name="Barrell B.G."/>
            <person name="Spratt B.G."/>
            <person name="Parkhill J."/>
        </authorList>
    </citation>
    <scope>NUCLEOTIDE SEQUENCE [LARGE SCALE GENOMIC DNA]</scope>
    <source>
        <strain>MSSA476</strain>
    </source>
</reference>
<gene>
    <name evidence="1" type="primary">fluC2</name>
    <name evidence="1" type="synonym">crcB2</name>
    <name type="ordered locus">SAS1707</name>
</gene>
<organism>
    <name type="scientific">Staphylococcus aureus (strain MSSA476)</name>
    <dbReference type="NCBI Taxonomy" id="282459"/>
    <lineage>
        <taxon>Bacteria</taxon>
        <taxon>Bacillati</taxon>
        <taxon>Bacillota</taxon>
        <taxon>Bacilli</taxon>
        <taxon>Bacillales</taxon>
        <taxon>Staphylococcaceae</taxon>
        <taxon>Staphylococcus</taxon>
    </lineage>
</organism>
<comment type="function">
    <text evidence="1">Fluoride-specific ion channel. Important for reducing fluoride concentration in the cell, thus reducing its toxicity.</text>
</comment>
<comment type="catalytic activity">
    <reaction evidence="1">
        <text>fluoride(in) = fluoride(out)</text>
        <dbReference type="Rhea" id="RHEA:76159"/>
        <dbReference type="ChEBI" id="CHEBI:17051"/>
    </reaction>
    <physiologicalReaction direction="left-to-right" evidence="1">
        <dbReference type="Rhea" id="RHEA:76160"/>
    </physiologicalReaction>
</comment>
<comment type="activity regulation">
    <text evidence="1">Na(+) is not transported, but it plays an essential structural role and its presence is essential for fluoride channel function.</text>
</comment>
<comment type="subcellular location">
    <subcellularLocation>
        <location evidence="1">Cell membrane</location>
        <topology evidence="1">Multi-pass membrane protein</topology>
    </subcellularLocation>
</comment>
<comment type="similarity">
    <text evidence="1">Belongs to the fluoride channel Fluc/FEX (TC 1.A.43) family.</text>
</comment>
<protein>
    <recommendedName>
        <fullName evidence="1">Fluoride-specific ion channel FluC 2</fullName>
    </recommendedName>
</protein>
<name>FLUC2_STAAS</name>
<keyword id="KW-1003">Cell membrane</keyword>
<keyword id="KW-0407">Ion channel</keyword>
<keyword id="KW-0406">Ion transport</keyword>
<keyword id="KW-0472">Membrane</keyword>
<keyword id="KW-0479">Metal-binding</keyword>
<keyword id="KW-0915">Sodium</keyword>
<keyword id="KW-0812">Transmembrane</keyword>
<keyword id="KW-1133">Transmembrane helix</keyword>
<keyword id="KW-0813">Transport</keyword>
<feature type="chain" id="PRO_0000110182" description="Fluoride-specific ion channel FluC 2">
    <location>
        <begin position="1"/>
        <end position="117"/>
    </location>
</feature>
<feature type="transmembrane region" description="Helical" evidence="1">
    <location>
        <begin position="1"/>
        <end position="21"/>
    </location>
</feature>
<feature type="transmembrane region" description="Helical" evidence="1">
    <location>
        <begin position="46"/>
        <end position="66"/>
    </location>
</feature>
<feature type="transmembrane region" description="Helical" evidence="1">
    <location>
        <begin position="95"/>
        <end position="115"/>
    </location>
</feature>
<feature type="binding site" evidence="1">
    <location>
        <position position="71"/>
    </location>
    <ligand>
        <name>Na(+)</name>
        <dbReference type="ChEBI" id="CHEBI:29101"/>
        <note>structural</note>
    </ligand>
</feature>
<feature type="binding site" evidence="1">
    <location>
        <position position="74"/>
    </location>
    <ligand>
        <name>Na(+)</name>
        <dbReference type="ChEBI" id="CHEBI:29101"/>
        <note>structural</note>
    </ligand>
</feature>